<organism>
    <name type="scientific">Populus trichocarpa</name>
    <name type="common">Western balsam poplar</name>
    <name type="synonym">Populus balsamifera subsp. trichocarpa</name>
    <dbReference type="NCBI Taxonomy" id="3694"/>
    <lineage>
        <taxon>Eukaryota</taxon>
        <taxon>Viridiplantae</taxon>
        <taxon>Streptophyta</taxon>
        <taxon>Embryophyta</taxon>
        <taxon>Tracheophyta</taxon>
        <taxon>Spermatophyta</taxon>
        <taxon>Magnoliopsida</taxon>
        <taxon>eudicotyledons</taxon>
        <taxon>Gunneridae</taxon>
        <taxon>Pentapetalae</taxon>
        <taxon>rosids</taxon>
        <taxon>fabids</taxon>
        <taxon>Malpighiales</taxon>
        <taxon>Salicaceae</taxon>
        <taxon>Saliceae</taxon>
        <taxon>Populus</taxon>
    </lineage>
</organism>
<keyword id="KW-1003">Cell membrane</keyword>
<keyword id="KW-0961">Cell wall biogenesis/degradation</keyword>
<keyword id="KW-0472">Membrane</keyword>
<keyword id="KW-1185">Reference proteome</keyword>
<keyword id="KW-0812">Transmembrane</keyword>
<keyword id="KW-1133">Transmembrane helix</keyword>
<name>CASP5_POPTR</name>
<sequence>MKAEAVESGEASTIIAAPKRGINRGISIADLILRGVAAIGTFASALTMGTTSETLTIFTQPIMIRAKYNDLPSLTFFVIANSIVCGYLVLSIPLSISHFIRREARITRIILVIFDTAMVELLTAGASAATVVVYLAHKRNANWLAICQQFNNFCERISGSLIGSFASIIMIMLIIITSAVALSRH</sequence>
<evidence type="ECO:0000250" key="1"/>
<evidence type="ECO:0000255" key="2"/>
<evidence type="ECO:0000305" key="3"/>
<proteinExistence type="evidence at transcript level"/>
<protein>
    <recommendedName>
        <fullName>Casparian strip membrane protein 5</fullName>
        <shortName>PtCASP5</shortName>
    </recommendedName>
</protein>
<dbReference type="EMBL" id="CM009297">
    <property type="protein sequence ID" value="EEE88677.2"/>
    <property type="molecule type" value="Genomic_DNA"/>
</dbReference>
<dbReference type="RefSeq" id="XP_002311310.2">
    <property type="nucleotide sequence ID" value="XM_002311274.2"/>
</dbReference>
<dbReference type="SMR" id="B9HI87"/>
<dbReference type="STRING" id="3694.B9HI87"/>
<dbReference type="KEGG" id="pop:7460698"/>
<dbReference type="eggNOG" id="ENOG502RXTK">
    <property type="taxonomic scope" value="Eukaryota"/>
</dbReference>
<dbReference type="HOGENOM" id="CLU_066104_3_2_1"/>
<dbReference type="InParanoid" id="B9HI87"/>
<dbReference type="OrthoDB" id="753675at2759"/>
<dbReference type="Proteomes" id="UP000006729">
    <property type="component" value="Chromosome 8"/>
</dbReference>
<dbReference type="GO" id="GO:0005886">
    <property type="term" value="C:plasma membrane"/>
    <property type="evidence" value="ECO:0000318"/>
    <property type="project" value="GO_Central"/>
</dbReference>
<dbReference type="GO" id="GO:0042545">
    <property type="term" value="P:cell wall modification"/>
    <property type="evidence" value="ECO:0000318"/>
    <property type="project" value="GO_Central"/>
</dbReference>
<dbReference type="GO" id="GO:0007043">
    <property type="term" value="P:cell-cell junction assembly"/>
    <property type="evidence" value="ECO:0000318"/>
    <property type="project" value="GO_Central"/>
</dbReference>
<dbReference type="InterPro" id="IPR006459">
    <property type="entry name" value="CASP/CASPL"/>
</dbReference>
<dbReference type="InterPro" id="IPR006702">
    <property type="entry name" value="CASP_dom"/>
</dbReference>
<dbReference type="InterPro" id="IPR044173">
    <property type="entry name" value="CASPL"/>
</dbReference>
<dbReference type="NCBIfam" id="TIGR01569">
    <property type="entry name" value="A_tha_TIGR01569"/>
    <property type="match status" value="1"/>
</dbReference>
<dbReference type="PANTHER" id="PTHR36488:SF12">
    <property type="entry name" value="CASP-LIKE PROTEIN"/>
    <property type="match status" value="1"/>
</dbReference>
<dbReference type="PANTHER" id="PTHR36488">
    <property type="entry name" value="CASP-LIKE PROTEIN 1U1"/>
    <property type="match status" value="1"/>
</dbReference>
<dbReference type="Pfam" id="PF04535">
    <property type="entry name" value="CASP_dom"/>
    <property type="match status" value="1"/>
</dbReference>
<gene>
    <name type="ORF">POPTRDRAFT_873343</name>
</gene>
<feature type="chain" id="PRO_0000391525" description="Casparian strip membrane protein 5">
    <location>
        <begin position="1"/>
        <end position="185"/>
    </location>
</feature>
<feature type="topological domain" description="Cytoplasmic" evidence="2">
    <location>
        <begin position="1"/>
        <end position="25"/>
    </location>
</feature>
<feature type="transmembrane region" description="Helical" evidence="2">
    <location>
        <begin position="26"/>
        <end position="46"/>
    </location>
</feature>
<feature type="topological domain" description="Extracellular" evidence="2">
    <location>
        <begin position="47"/>
        <end position="75"/>
    </location>
</feature>
<feature type="transmembrane region" description="Helical" evidence="2">
    <location>
        <begin position="76"/>
        <end position="96"/>
    </location>
</feature>
<feature type="topological domain" description="Cytoplasmic" evidence="2">
    <location>
        <begin position="97"/>
        <end position="108"/>
    </location>
</feature>
<feature type="transmembrane region" description="Helical" evidence="2">
    <location>
        <begin position="109"/>
        <end position="129"/>
    </location>
</feature>
<feature type="topological domain" description="Extracellular" evidence="2">
    <location>
        <begin position="130"/>
        <end position="160"/>
    </location>
</feature>
<feature type="transmembrane region" description="Helical" evidence="2">
    <location>
        <begin position="161"/>
        <end position="181"/>
    </location>
</feature>
<feature type="topological domain" description="Cytoplasmic" evidence="2">
    <location>
        <begin position="182"/>
        <end position="185"/>
    </location>
</feature>
<accession>B9HI87</accession>
<comment type="function">
    <text evidence="1">Regulates membrane-cell wall junctions and localized cell wall deposition. Required for establishment of the Casparian strip membrane domain (CSD) and the subsequent formation of Casparian strips, a cell wall modification of the root endodermis that determines an apoplastic barrier between the intraorganismal apoplasm and the extraorganismal apoplasm and prevents lateral diffusion (By similarity).</text>
</comment>
<comment type="subunit">
    <text evidence="1">Homodimer and heterodimers.</text>
</comment>
<comment type="subcellular location">
    <subcellularLocation>
        <location evidence="1">Cell membrane</location>
        <topology evidence="1">Multi-pass membrane protein</topology>
    </subcellularLocation>
    <text evidence="1">Very restricted localization following a belt shape within the plasma membrane which coincides with the position of the Casparian strip membrane domain in the root endodermis.</text>
</comment>
<comment type="similarity">
    <text evidence="3">Belongs to the Casparian strip membrane proteins (CASP) family.</text>
</comment>
<reference key="1">
    <citation type="journal article" date="2006" name="Science">
        <title>The genome of black cottonwood, Populus trichocarpa (Torr. &amp; Gray).</title>
        <authorList>
            <person name="Tuskan G.A."/>
            <person name="Difazio S."/>
            <person name="Jansson S."/>
            <person name="Bohlmann J."/>
            <person name="Grigoriev I."/>
            <person name="Hellsten U."/>
            <person name="Putnam N."/>
            <person name="Ralph S."/>
            <person name="Rombauts S."/>
            <person name="Salamov A."/>
            <person name="Schein J."/>
            <person name="Sterck L."/>
            <person name="Aerts A."/>
            <person name="Bhalerao R.R."/>
            <person name="Bhalerao R.P."/>
            <person name="Blaudez D."/>
            <person name="Boerjan W."/>
            <person name="Brun A."/>
            <person name="Brunner A."/>
            <person name="Busov V."/>
            <person name="Campbell M."/>
            <person name="Carlson J."/>
            <person name="Chalot M."/>
            <person name="Chapman J."/>
            <person name="Chen G.-L."/>
            <person name="Cooper D."/>
            <person name="Coutinho P.M."/>
            <person name="Couturier J."/>
            <person name="Covert S."/>
            <person name="Cronk Q."/>
            <person name="Cunningham R."/>
            <person name="Davis J."/>
            <person name="Degroeve S."/>
            <person name="Dejardin A."/>
            <person name="dePamphilis C.W."/>
            <person name="Detter J."/>
            <person name="Dirks B."/>
            <person name="Dubchak I."/>
            <person name="Duplessis S."/>
            <person name="Ehlting J."/>
            <person name="Ellis B."/>
            <person name="Gendler K."/>
            <person name="Goodstein D."/>
            <person name="Gribskov M."/>
            <person name="Grimwood J."/>
            <person name="Groover A."/>
            <person name="Gunter L."/>
            <person name="Hamberger B."/>
            <person name="Heinze B."/>
            <person name="Helariutta Y."/>
            <person name="Henrissat B."/>
            <person name="Holligan D."/>
            <person name="Holt R."/>
            <person name="Huang W."/>
            <person name="Islam-Faridi N."/>
            <person name="Jones S."/>
            <person name="Jones-Rhoades M."/>
            <person name="Jorgensen R."/>
            <person name="Joshi C."/>
            <person name="Kangasjaervi J."/>
            <person name="Karlsson J."/>
            <person name="Kelleher C."/>
            <person name="Kirkpatrick R."/>
            <person name="Kirst M."/>
            <person name="Kohler A."/>
            <person name="Kalluri U."/>
            <person name="Larimer F."/>
            <person name="Leebens-Mack J."/>
            <person name="Leple J.-C."/>
            <person name="Locascio P."/>
            <person name="Lou Y."/>
            <person name="Lucas S."/>
            <person name="Martin F."/>
            <person name="Montanini B."/>
            <person name="Napoli C."/>
            <person name="Nelson D.R."/>
            <person name="Nelson C."/>
            <person name="Nieminen K."/>
            <person name="Nilsson O."/>
            <person name="Pereda V."/>
            <person name="Peter G."/>
            <person name="Philippe R."/>
            <person name="Pilate G."/>
            <person name="Poliakov A."/>
            <person name="Razumovskaya J."/>
            <person name="Richardson P."/>
            <person name="Rinaldi C."/>
            <person name="Ritland K."/>
            <person name="Rouze P."/>
            <person name="Ryaboy D."/>
            <person name="Schmutz J."/>
            <person name="Schrader J."/>
            <person name="Segerman B."/>
            <person name="Shin H."/>
            <person name="Siddiqui A."/>
            <person name="Sterky F."/>
            <person name="Terry A."/>
            <person name="Tsai C.-J."/>
            <person name="Uberbacher E."/>
            <person name="Unneberg P."/>
            <person name="Vahala J."/>
            <person name="Wall K."/>
            <person name="Wessler S."/>
            <person name="Yang G."/>
            <person name="Yin T."/>
            <person name="Douglas C."/>
            <person name="Marra M."/>
            <person name="Sandberg G."/>
            <person name="Van de Peer Y."/>
            <person name="Rokhsar D.S."/>
        </authorList>
    </citation>
    <scope>NUCLEOTIDE SEQUENCE [LARGE SCALE GENOMIC DNA]</scope>
    <source>
        <strain>cv. Nisqually</strain>
    </source>
</reference>
<reference key="2">
    <citation type="submission" date="2008-12" db="EMBL/GenBank/DDBJ databases">
        <authorList>
            <consortium name="US DOE Joint Genome Institute (JGI-PGF)"/>
            <person name="Grigoriev I.V."/>
            <person name="Terry A."/>
            <person name="Salamov A.A."/>
            <person name="Otillar R."/>
            <person name="Lou Y."/>
            <person name="Lucas S."/>
            <person name="Hammon N."/>
            <person name="Glavina del Rio T."/>
            <person name="Detter J."/>
            <person name="Kalin E."/>
            <person name="Tice H."/>
            <person name="Pitluck S."/>
            <person name="Chapman J."/>
            <person name="Putnam N.H."/>
            <person name="Brunner A."/>
            <person name="Busov V."/>
            <person name="Campbell M."/>
            <person name="Chalot M."/>
            <person name="Covert S."/>
            <person name="Davis J."/>
            <person name="DiFazio S."/>
            <person name="Gribskov M."/>
            <person name="Gunter L."/>
            <person name="Hamberger B."/>
            <person name="Jansson S."/>
            <person name="Joshi C."/>
            <person name="Larimer F."/>
            <person name="Martin F."/>
            <person name="Napoli C."/>
            <person name="Nelson D."/>
            <person name="Ralph S."/>
            <person name="Rombauts S."/>
            <person name="Rouze P."/>
            <person name="Schrader J."/>
            <person name="Tsai C."/>
            <person name="Vahala J."/>
            <person name="Tuskan G."/>
            <person name="Rokhsar D."/>
        </authorList>
    </citation>
    <scope>GENOME REANNOTATION</scope>
    <source>
        <strain>cv. Nisqually</strain>
    </source>
</reference>
<reference key="3">
    <citation type="journal article" date="2014" name="Plant Physiol.">
        <title>Functional and evolutionary analysis of the CASPARIAN STRIP MEMBRANE DOMAIN PROTEIN family.</title>
        <authorList>
            <person name="Roppolo D."/>
            <person name="Boeckmann B."/>
            <person name="Pfister A."/>
            <person name="Boutet E."/>
            <person name="Rubio M.C."/>
            <person name="Denervaud-Tendon V."/>
            <person name="Vermeer J.E."/>
            <person name="Gheyselinck J."/>
            <person name="Xenarios I."/>
            <person name="Geldner N."/>
        </authorList>
    </citation>
    <scope>GENE FAMILY</scope>
    <scope>NOMENCLATURE</scope>
</reference>